<reference key="1">
    <citation type="submission" date="2005-09" db="EMBL/GenBank/DDBJ databases">
        <title>Complete genome sequence of Clostridium kluyveri and comparative genomics of Clostridia species.</title>
        <authorList>
            <person name="Inui M."/>
            <person name="Nonaka H."/>
            <person name="Shinoda Y."/>
            <person name="Ikenaga Y."/>
            <person name="Abe M."/>
            <person name="Naito K."/>
            <person name="Vertes A.A."/>
            <person name="Yukawa H."/>
        </authorList>
    </citation>
    <scope>NUCLEOTIDE SEQUENCE [LARGE SCALE GENOMIC DNA]</scope>
    <source>
        <strain>NBRC 12016</strain>
    </source>
</reference>
<organism>
    <name type="scientific">Clostridium kluyveri (strain NBRC 12016)</name>
    <dbReference type="NCBI Taxonomy" id="583346"/>
    <lineage>
        <taxon>Bacteria</taxon>
        <taxon>Bacillati</taxon>
        <taxon>Bacillota</taxon>
        <taxon>Clostridia</taxon>
        <taxon>Eubacteriales</taxon>
        <taxon>Clostridiaceae</taxon>
        <taxon>Clostridium</taxon>
    </lineage>
</organism>
<feature type="chain" id="PRO_1000133211" description="ATP-dependent dethiobiotin synthetase BioD">
    <location>
        <begin position="1"/>
        <end position="241"/>
    </location>
</feature>
<feature type="active site" evidence="1">
    <location>
        <position position="38"/>
    </location>
</feature>
<feature type="binding site" evidence="1">
    <location>
        <begin position="13"/>
        <end position="18"/>
    </location>
    <ligand>
        <name>ATP</name>
        <dbReference type="ChEBI" id="CHEBI:30616"/>
    </ligand>
</feature>
<feature type="binding site" evidence="1">
    <location>
        <position position="17"/>
    </location>
    <ligand>
        <name>Mg(2+)</name>
        <dbReference type="ChEBI" id="CHEBI:18420"/>
    </ligand>
</feature>
<feature type="binding site" evidence="1">
    <location>
        <position position="42"/>
    </location>
    <ligand>
        <name>substrate</name>
    </ligand>
</feature>
<feature type="binding site" evidence="1">
    <location>
        <position position="55"/>
    </location>
    <ligand>
        <name>ATP</name>
        <dbReference type="ChEBI" id="CHEBI:30616"/>
    </ligand>
</feature>
<feature type="binding site" evidence="1">
    <location>
        <position position="55"/>
    </location>
    <ligand>
        <name>Mg(2+)</name>
        <dbReference type="ChEBI" id="CHEBI:18420"/>
    </ligand>
</feature>
<feature type="binding site" evidence="1">
    <location>
        <begin position="116"/>
        <end position="119"/>
    </location>
    <ligand>
        <name>ATP</name>
        <dbReference type="ChEBI" id="CHEBI:30616"/>
    </ligand>
</feature>
<feature type="binding site" evidence="1">
    <location>
        <position position="116"/>
    </location>
    <ligand>
        <name>Mg(2+)</name>
        <dbReference type="ChEBI" id="CHEBI:18420"/>
    </ligand>
</feature>
<feature type="binding site" evidence="1">
    <location>
        <begin position="180"/>
        <end position="181"/>
    </location>
    <ligand>
        <name>ATP</name>
        <dbReference type="ChEBI" id="CHEBI:30616"/>
    </ligand>
</feature>
<accession>B9E076</accession>
<dbReference type="EC" id="6.3.3.3" evidence="1"/>
<dbReference type="EMBL" id="AP009049">
    <property type="protein sequence ID" value="BAH05901.1"/>
    <property type="molecule type" value="Genomic_DNA"/>
</dbReference>
<dbReference type="RefSeq" id="WP_012101317.1">
    <property type="nucleotide sequence ID" value="NC_011837.1"/>
</dbReference>
<dbReference type="SMR" id="B9E076"/>
<dbReference type="KEGG" id="ckr:CKR_0850"/>
<dbReference type="HOGENOM" id="CLU_072551_3_0_9"/>
<dbReference type="UniPathway" id="UPA00078">
    <property type="reaction ID" value="UER00161"/>
</dbReference>
<dbReference type="Proteomes" id="UP000007969">
    <property type="component" value="Chromosome"/>
</dbReference>
<dbReference type="GO" id="GO:0005829">
    <property type="term" value="C:cytosol"/>
    <property type="evidence" value="ECO:0007669"/>
    <property type="project" value="TreeGrafter"/>
</dbReference>
<dbReference type="GO" id="GO:0005524">
    <property type="term" value="F:ATP binding"/>
    <property type="evidence" value="ECO:0007669"/>
    <property type="project" value="UniProtKB-UniRule"/>
</dbReference>
<dbReference type="GO" id="GO:0004141">
    <property type="term" value="F:dethiobiotin synthase activity"/>
    <property type="evidence" value="ECO:0007669"/>
    <property type="project" value="UniProtKB-UniRule"/>
</dbReference>
<dbReference type="GO" id="GO:0000287">
    <property type="term" value="F:magnesium ion binding"/>
    <property type="evidence" value="ECO:0007669"/>
    <property type="project" value="UniProtKB-UniRule"/>
</dbReference>
<dbReference type="GO" id="GO:0009102">
    <property type="term" value="P:biotin biosynthetic process"/>
    <property type="evidence" value="ECO:0007669"/>
    <property type="project" value="UniProtKB-UniRule"/>
</dbReference>
<dbReference type="CDD" id="cd03109">
    <property type="entry name" value="DTBS"/>
    <property type="match status" value="1"/>
</dbReference>
<dbReference type="FunFam" id="3.40.50.300:FF:000292">
    <property type="entry name" value="ATP-dependent dethiobiotin synthetase BioD"/>
    <property type="match status" value="1"/>
</dbReference>
<dbReference type="Gene3D" id="3.40.50.300">
    <property type="entry name" value="P-loop containing nucleotide triphosphate hydrolases"/>
    <property type="match status" value="1"/>
</dbReference>
<dbReference type="HAMAP" id="MF_00336">
    <property type="entry name" value="BioD"/>
    <property type="match status" value="1"/>
</dbReference>
<dbReference type="InterPro" id="IPR004472">
    <property type="entry name" value="DTB_synth_BioD"/>
</dbReference>
<dbReference type="InterPro" id="IPR027417">
    <property type="entry name" value="P-loop_NTPase"/>
</dbReference>
<dbReference type="NCBIfam" id="TIGR00347">
    <property type="entry name" value="bioD"/>
    <property type="match status" value="1"/>
</dbReference>
<dbReference type="PANTHER" id="PTHR43210:SF2">
    <property type="entry name" value="ATP-DEPENDENT DETHIOBIOTIN SYNTHETASE BIOD 2"/>
    <property type="match status" value="1"/>
</dbReference>
<dbReference type="PANTHER" id="PTHR43210">
    <property type="entry name" value="DETHIOBIOTIN SYNTHETASE"/>
    <property type="match status" value="1"/>
</dbReference>
<dbReference type="Pfam" id="PF13500">
    <property type="entry name" value="AAA_26"/>
    <property type="match status" value="1"/>
</dbReference>
<dbReference type="PIRSF" id="PIRSF006755">
    <property type="entry name" value="DTB_synth"/>
    <property type="match status" value="1"/>
</dbReference>
<dbReference type="SUPFAM" id="SSF52540">
    <property type="entry name" value="P-loop containing nucleoside triphosphate hydrolases"/>
    <property type="match status" value="1"/>
</dbReference>
<gene>
    <name evidence="1" type="primary">bioD</name>
    <name type="ordered locus">CKR_0850</name>
</gene>
<sequence>MAKGIFIVGTDTDIGKTVVTAGLMHVLRSRGYNAVYFKAALSGALEIDNKLIPSDTKLVSDVSKLEEPYENITPYVYRTGVSPHLAARLENNPMDLDIVKEKYVYLKEKYDFIIAEGSGGIVCPLIDDGRGVYTIGNLIKDLNMSVIIVASAGLGTINHTVLTAKYIENLGIKIEGIIINKYEKDLFYDDNIGMIEKITKLPIVAKLKNIKDMNDNEIEAIRIHSEKAFSAENIIKHMEQL</sequence>
<evidence type="ECO:0000255" key="1">
    <source>
        <dbReference type="HAMAP-Rule" id="MF_00336"/>
    </source>
</evidence>
<keyword id="KW-0067">ATP-binding</keyword>
<keyword id="KW-0093">Biotin biosynthesis</keyword>
<keyword id="KW-0963">Cytoplasm</keyword>
<keyword id="KW-0436">Ligase</keyword>
<keyword id="KW-0460">Magnesium</keyword>
<keyword id="KW-0479">Metal-binding</keyword>
<keyword id="KW-0547">Nucleotide-binding</keyword>
<name>BIOD_CLOK1</name>
<comment type="function">
    <text evidence="1">Catalyzes a mechanistically unusual reaction, the ATP-dependent insertion of CO2 between the N7 and N8 nitrogen atoms of 7,8-diaminopelargonic acid (DAPA, also called 7,8-diammoniononanoate) to form a ureido ring.</text>
</comment>
<comment type="catalytic activity">
    <reaction evidence="1">
        <text>(7R,8S)-7,8-diammoniononanoate + CO2 + ATP = (4R,5S)-dethiobiotin + ADP + phosphate + 3 H(+)</text>
        <dbReference type="Rhea" id="RHEA:15805"/>
        <dbReference type="ChEBI" id="CHEBI:15378"/>
        <dbReference type="ChEBI" id="CHEBI:16526"/>
        <dbReference type="ChEBI" id="CHEBI:30616"/>
        <dbReference type="ChEBI" id="CHEBI:43474"/>
        <dbReference type="ChEBI" id="CHEBI:149469"/>
        <dbReference type="ChEBI" id="CHEBI:149473"/>
        <dbReference type="ChEBI" id="CHEBI:456216"/>
        <dbReference type="EC" id="6.3.3.3"/>
    </reaction>
</comment>
<comment type="cofactor">
    <cofactor evidence="1">
        <name>Mg(2+)</name>
        <dbReference type="ChEBI" id="CHEBI:18420"/>
    </cofactor>
</comment>
<comment type="pathway">
    <text evidence="1">Cofactor biosynthesis; biotin biosynthesis; biotin from 7,8-diaminononanoate: step 1/2.</text>
</comment>
<comment type="subunit">
    <text evidence="1">Homodimer.</text>
</comment>
<comment type="subcellular location">
    <subcellularLocation>
        <location evidence="1">Cytoplasm</location>
    </subcellularLocation>
</comment>
<comment type="similarity">
    <text evidence="1">Belongs to the dethiobiotin synthetase family.</text>
</comment>
<proteinExistence type="inferred from homology"/>
<protein>
    <recommendedName>
        <fullName evidence="1">ATP-dependent dethiobiotin synthetase BioD</fullName>
        <ecNumber evidence="1">6.3.3.3</ecNumber>
    </recommendedName>
    <alternativeName>
        <fullName evidence="1">DTB synthetase</fullName>
        <shortName evidence="1">DTBS</shortName>
    </alternativeName>
    <alternativeName>
        <fullName evidence="1">Dethiobiotin synthase</fullName>
    </alternativeName>
</protein>